<keyword id="KW-0687">Ribonucleoprotein</keyword>
<keyword id="KW-0689">Ribosomal protein</keyword>
<gene>
    <name evidence="1" type="primary">rpsI</name>
    <name type="ordered locus">BAbS19_I07580</name>
</gene>
<accession>B2S535</accession>
<proteinExistence type="inferred from homology"/>
<name>RS9_BRUA1</name>
<comment type="similarity">
    <text evidence="1">Belongs to the universal ribosomal protein uS9 family.</text>
</comment>
<reference key="1">
    <citation type="journal article" date="2008" name="PLoS ONE">
        <title>Genome sequence of Brucella abortus vaccine strain S19 compared to virulent strains yields candidate virulence genes.</title>
        <authorList>
            <person name="Crasta O.R."/>
            <person name="Folkerts O."/>
            <person name="Fei Z."/>
            <person name="Mane S.P."/>
            <person name="Evans C."/>
            <person name="Martino-Catt S."/>
            <person name="Bricker B."/>
            <person name="Yu G."/>
            <person name="Du L."/>
            <person name="Sobral B.W."/>
        </authorList>
    </citation>
    <scope>NUCLEOTIDE SEQUENCE [LARGE SCALE GENOMIC DNA]</scope>
    <source>
        <strain>S19</strain>
    </source>
</reference>
<protein>
    <recommendedName>
        <fullName evidence="1">Small ribosomal subunit protein uS9</fullName>
    </recommendedName>
    <alternativeName>
        <fullName evidence="2">30S ribosomal protein S9</fullName>
    </alternativeName>
</protein>
<organism>
    <name type="scientific">Brucella abortus (strain S19)</name>
    <dbReference type="NCBI Taxonomy" id="430066"/>
    <lineage>
        <taxon>Bacteria</taxon>
        <taxon>Pseudomonadati</taxon>
        <taxon>Pseudomonadota</taxon>
        <taxon>Alphaproteobacteria</taxon>
        <taxon>Hyphomicrobiales</taxon>
        <taxon>Brucellaceae</taxon>
        <taxon>Brucella/Ochrobactrum group</taxon>
        <taxon>Brucella</taxon>
    </lineage>
</organism>
<evidence type="ECO:0000255" key="1">
    <source>
        <dbReference type="HAMAP-Rule" id="MF_00532"/>
    </source>
</evidence>
<evidence type="ECO:0000305" key="2"/>
<dbReference type="EMBL" id="CP000887">
    <property type="protein sequence ID" value="ACD72282.1"/>
    <property type="molecule type" value="Genomic_DNA"/>
</dbReference>
<dbReference type="RefSeq" id="WP_002966767.1">
    <property type="nucleotide sequence ID" value="NC_010742.1"/>
</dbReference>
<dbReference type="SMR" id="B2S535"/>
<dbReference type="GeneID" id="93016821"/>
<dbReference type="KEGG" id="bmc:BAbS19_I07580"/>
<dbReference type="HOGENOM" id="CLU_046483_2_0_5"/>
<dbReference type="Proteomes" id="UP000002565">
    <property type="component" value="Chromosome 1"/>
</dbReference>
<dbReference type="GO" id="GO:0022627">
    <property type="term" value="C:cytosolic small ribosomal subunit"/>
    <property type="evidence" value="ECO:0007669"/>
    <property type="project" value="TreeGrafter"/>
</dbReference>
<dbReference type="GO" id="GO:0003723">
    <property type="term" value="F:RNA binding"/>
    <property type="evidence" value="ECO:0007669"/>
    <property type="project" value="TreeGrafter"/>
</dbReference>
<dbReference type="GO" id="GO:0003735">
    <property type="term" value="F:structural constituent of ribosome"/>
    <property type="evidence" value="ECO:0007669"/>
    <property type="project" value="InterPro"/>
</dbReference>
<dbReference type="GO" id="GO:0006412">
    <property type="term" value="P:translation"/>
    <property type="evidence" value="ECO:0007669"/>
    <property type="project" value="UniProtKB-UniRule"/>
</dbReference>
<dbReference type="FunFam" id="3.30.230.10:FF:000034">
    <property type="entry name" value="30S ribosomal protein S9"/>
    <property type="match status" value="1"/>
</dbReference>
<dbReference type="Gene3D" id="3.30.230.10">
    <property type="match status" value="1"/>
</dbReference>
<dbReference type="HAMAP" id="MF_00532_B">
    <property type="entry name" value="Ribosomal_uS9_B"/>
    <property type="match status" value="1"/>
</dbReference>
<dbReference type="InterPro" id="IPR020568">
    <property type="entry name" value="Ribosomal_Su5_D2-typ_SF"/>
</dbReference>
<dbReference type="InterPro" id="IPR000754">
    <property type="entry name" value="Ribosomal_uS9"/>
</dbReference>
<dbReference type="InterPro" id="IPR023035">
    <property type="entry name" value="Ribosomal_uS9_bac/plastid"/>
</dbReference>
<dbReference type="InterPro" id="IPR020574">
    <property type="entry name" value="Ribosomal_uS9_CS"/>
</dbReference>
<dbReference type="InterPro" id="IPR014721">
    <property type="entry name" value="Ribsml_uS5_D2-typ_fold_subgr"/>
</dbReference>
<dbReference type="NCBIfam" id="NF001099">
    <property type="entry name" value="PRK00132.1"/>
    <property type="match status" value="1"/>
</dbReference>
<dbReference type="PANTHER" id="PTHR21569">
    <property type="entry name" value="RIBOSOMAL PROTEIN S9"/>
    <property type="match status" value="1"/>
</dbReference>
<dbReference type="PANTHER" id="PTHR21569:SF1">
    <property type="entry name" value="SMALL RIBOSOMAL SUBUNIT PROTEIN US9M"/>
    <property type="match status" value="1"/>
</dbReference>
<dbReference type="Pfam" id="PF00380">
    <property type="entry name" value="Ribosomal_S9"/>
    <property type="match status" value="1"/>
</dbReference>
<dbReference type="SUPFAM" id="SSF54211">
    <property type="entry name" value="Ribosomal protein S5 domain 2-like"/>
    <property type="match status" value="1"/>
</dbReference>
<dbReference type="PROSITE" id="PS00360">
    <property type="entry name" value="RIBOSOMAL_S9"/>
    <property type="match status" value="1"/>
</dbReference>
<sequence length="158" mass="17173">MAESINSLEELGTVAKTEAAAPVHVQKLDAQGRAYATGKRKDAVARVWVKPGTGKITVNDKEFEKYFARPVLQMILQQPIVASNRAGQFDIVATVAGGGLSGQAGAVRHGISKALTDYEPGLRTVLKKGGFLTRDSRVVERKKYGKAKARRSFQFSKR</sequence>
<feature type="chain" id="PRO_1000128090" description="Small ribosomal subunit protein uS9">
    <location>
        <begin position="1"/>
        <end position="158"/>
    </location>
</feature>